<dbReference type="EMBL" id="CR858522">
    <property type="protein sequence ID" value="CAH90749.1"/>
    <property type="molecule type" value="mRNA"/>
</dbReference>
<dbReference type="EMBL" id="CR858561">
    <property type="protein sequence ID" value="CAH90787.1"/>
    <property type="molecule type" value="mRNA"/>
</dbReference>
<dbReference type="RefSeq" id="NP_001125445.1">
    <property type="nucleotide sequence ID" value="NM_001131973.1"/>
</dbReference>
<dbReference type="SMR" id="Q5RBS3"/>
<dbReference type="STRING" id="9601.ENSPPYP00000004218"/>
<dbReference type="MEROPS" id="I04.035"/>
<dbReference type="GlyCosmos" id="Q5RBS3">
    <property type="glycosylation" value="2 sites, No reported glycans"/>
</dbReference>
<dbReference type="GeneID" id="100172353"/>
<dbReference type="KEGG" id="pon:100172353"/>
<dbReference type="CTD" id="871"/>
<dbReference type="eggNOG" id="KOG2392">
    <property type="taxonomic scope" value="Eukaryota"/>
</dbReference>
<dbReference type="InParanoid" id="Q5RBS3"/>
<dbReference type="OrthoDB" id="671595at2759"/>
<dbReference type="Proteomes" id="UP000001595">
    <property type="component" value="Unplaced"/>
</dbReference>
<dbReference type="GO" id="GO:0005788">
    <property type="term" value="C:endoplasmic reticulum lumen"/>
    <property type="evidence" value="ECO:0007669"/>
    <property type="project" value="UniProtKB-SubCell"/>
</dbReference>
<dbReference type="GO" id="GO:0005615">
    <property type="term" value="C:extracellular space"/>
    <property type="evidence" value="ECO:0007669"/>
    <property type="project" value="InterPro"/>
</dbReference>
<dbReference type="GO" id="GO:0004867">
    <property type="term" value="F:serine-type endopeptidase inhibitor activity"/>
    <property type="evidence" value="ECO:0007669"/>
    <property type="project" value="InterPro"/>
</dbReference>
<dbReference type="GO" id="GO:0030199">
    <property type="term" value="P:collagen fibril organization"/>
    <property type="evidence" value="ECO:0007669"/>
    <property type="project" value="TreeGrafter"/>
</dbReference>
<dbReference type="FunFam" id="2.30.39.10:FF:000072">
    <property type="entry name" value="Serpin peptidase inhibitor, clade H (Heat shock protein 47), member 1, (Collagen binding protein 1)"/>
    <property type="match status" value="1"/>
</dbReference>
<dbReference type="FunFam" id="3.30.497.10:FF:000034">
    <property type="entry name" value="SERPINH1 isoform 13"/>
    <property type="match status" value="1"/>
</dbReference>
<dbReference type="Gene3D" id="2.30.39.10">
    <property type="entry name" value="Alpha-1-antitrypsin, domain 1"/>
    <property type="match status" value="1"/>
</dbReference>
<dbReference type="Gene3D" id="3.30.497.10">
    <property type="entry name" value="Antithrombin, subunit I, domain 2"/>
    <property type="match status" value="1"/>
</dbReference>
<dbReference type="InterPro" id="IPR023795">
    <property type="entry name" value="Serpin_CS"/>
</dbReference>
<dbReference type="InterPro" id="IPR023796">
    <property type="entry name" value="Serpin_dom"/>
</dbReference>
<dbReference type="InterPro" id="IPR000215">
    <property type="entry name" value="Serpin_fam"/>
</dbReference>
<dbReference type="InterPro" id="IPR036186">
    <property type="entry name" value="Serpin_sf"/>
</dbReference>
<dbReference type="InterPro" id="IPR042178">
    <property type="entry name" value="Serpin_sf_1"/>
</dbReference>
<dbReference type="InterPro" id="IPR042185">
    <property type="entry name" value="Serpin_sf_2"/>
</dbReference>
<dbReference type="PANTHER" id="PTHR11461">
    <property type="entry name" value="SERINE PROTEASE INHIBITOR, SERPIN"/>
    <property type="match status" value="1"/>
</dbReference>
<dbReference type="PANTHER" id="PTHR11461:SF27">
    <property type="entry name" value="SERPIN H1"/>
    <property type="match status" value="1"/>
</dbReference>
<dbReference type="Pfam" id="PF00079">
    <property type="entry name" value="Serpin"/>
    <property type="match status" value="1"/>
</dbReference>
<dbReference type="SMART" id="SM00093">
    <property type="entry name" value="SERPIN"/>
    <property type="match status" value="1"/>
</dbReference>
<dbReference type="SUPFAM" id="SSF56574">
    <property type="entry name" value="Serpins"/>
    <property type="match status" value="1"/>
</dbReference>
<dbReference type="PROSITE" id="PS00014">
    <property type="entry name" value="ER_TARGET"/>
    <property type="match status" value="1"/>
</dbReference>
<dbReference type="PROSITE" id="PS00284">
    <property type="entry name" value="SERPIN"/>
    <property type="match status" value="1"/>
</dbReference>
<accession>Q5RBS3</accession>
<keyword id="KW-0007">Acetylation</keyword>
<keyword id="KW-0143">Chaperone</keyword>
<keyword id="KW-0256">Endoplasmic reticulum</keyword>
<keyword id="KW-0325">Glycoprotein</keyword>
<keyword id="KW-0597">Phosphoprotein</keyword>
<keyword id="KW-1185">Reference proteome</keyword>
<keyword id="KW-0732">Signal</keyword>
<reference key="1">
    <citation type="submission" date="2004-11" db="EMBL/GenBank/DDBJ databases">
        <authorList>
            <consortium name="The German cDNA consortium"/>
        </authorList>
    </citation>
    <scope>NUCLEOTIDE SEQUENCE [LARGE SCALE MRNA]</scope>
    <source>
        <tissue>Heart</tissue>
    </source>
</reference>
<name>SERPH_PONAB</name>
<protein>
    <recommendedName>
        <fullName>Serpin H1</fullName>
    </recommendedName>
    <alternativeName>
        <fullName>Collagen-binding protein</fullName>
        <shortName>Colligin</shortName>
    </alternativeName>
</protein>
<sequence length="417" mass="45762">MRSLLLLSAFCLLEAALAAEVKKPAAAAAPGTAEKLSPKAATLAERSAGLAFSLYQAMAKDQAVENILVSPVVVASSLGLVSLGGKATTASQAKAVLSAEQLRDEEVHAGLGELLRSLSNSTARNVTWKLGSRLYGPSSVSFADDFVRTASSTTTASTPRSTSATSAALQSINEWAAQTTDGKLPEVTKDVERTDGALLVNAMFFKPHWDEKFHHKMVDNRGFMVTRSYTVGVMMMHRTGLYNYYDDEKEKLQIVEMPLAHKLSSLIILMPHHVEPLERLEKLLTKEQLKIWMGKMQKKAVAISLPKGVVEVTHDLQKHLAGLGLTEAIDKNKADLSRMSGKKDLYLASVFHATAFELDTDGNPFDQDIYGREELRSPKLFYADHPFIFLVRDTQSGSLLFIGRLVRPKGDKMRDEL</sequence>
<organism>
    <name type="scientific">Pongo abelii</name>
    <name type="common">Sumatran orangutan</name>
    <name type="synonym">Pongo pygmaeus abelii</name>
    <dbReference type="NCBI Taxonomy" id="9601"/>
    <lineage>
        <taxon>Eukaryota</taxon>
        <taxon>Metazoa</taxon>
        <taxon>Chordata</taxon>
        <taxon>Craniata</taxon>
        <taxon>Vertebrata</taxon>
        <taxon>Euteleostomi</taxon>
        <taxon>Mammalia</taxon>
        <taxon>Eutheria</taxon>
        <taxon>Euarchontoglires</taxon>
        <taxon>Primates</taxon>
        <taxon>Haplorrhini</taxon>
        <taxon>Catarrhini</taxon>
        <taxon>Hominidae</taxon>
        <taxon>Pongo</taxon>
    </lineage>
</organism>
<evidence type="ECO:0000250" key="1"/>
<evidence type="ECO:0000250" key="2">
    <source>
        <dbReference type="UniProtKB" id="P19324"/>
    </source>
</evidence>
<evidence type="ECO:0000250" key="3">
    <source>
        <dbReference type="UniProtKB" id="P50454"/>
    </source>
</evidence>
<evidence type="ECO:0000255" key="4"/>
<evidence type="ECO:0000255" key="5">
    <source>
        <dbReference type="PROSITE-ProRule" id="PRU10138"/>
    </source>
</evidence>
<evidence type="ECO:0000305" key="6"/>
<feature type="signal peptide" evidence="4">
    <location>
        <begin position="1"/>
        <end position="18"/>
    </location>
</feature>
<feature type="chain" id="PRO_0000253605" description="Serpin H1">
    <location>
        <begin position="19"/>
        <end position="417"/>
    </location>
</feature>
<feature type="short sequence motif" description="Prevents secretion from ER" evidence="5">
    <location>
        <begin position="414"/>
        <end position="417"/>
    </location>
</feature>
<feature type="site" description="Reactive bond homolog" evidence="1">
    <location>
        <begin position="376"/>
        <end position="377"/>
    </location>
</feature>
<feature type="modified residue" description="N6-succinyllysine" evidence="2">
    <location>
        <position position="94"/>
    </location>
</feature>
<feature type="modified residue" description="Phosphoserine" evidence="3">
    <location>
        <position position="141"/>
    </location>
</feature>
<feature type="modified residue" description="N6-acetyllysine" evidence="2">
    <location>
        <position position="206"/>
    </location>
</feature>
<feature type="modified residue" description="N6-succinyllysine" evidence="2">
    <location>
        <position position="295"/>
    </location>
</feature>
<feature type="modified residue" description="N6-acetyllysine" evidence="2">
    <location>
        <position position="318"/>
    </location>
</feature>
<feature type="glycosylation site" description="N-linked (GlcNAc...) asparagine" evidence="4">
    <location>
        <position position="120"/>
    </location>
</feature>
<feature type="glycosylation site" description="N-linked (GlcNAc...) asparagine" evidence="4">
    <location>
        <position position="125"/>
    </location>
</feature>
<comment type="function">
    <text evidence="1">Binds specifically to collagen. Could be involved as a chaperone in the biosynthetic pathway of collagen (By similarity).</text>
</comment>
<comment type="subcellular location">
    <subcellularLocation>
        <location evidence="5">Endoplasmic reticulum lumen</location>
    </subcellularLocation>
</comment>
<comment type="similarity">
    <text evidence="6">Belongs to the serpin family.</text>
</comment>
<gene>
    <name type="primary">SERPINH1</name>
</gene>
<proteinExistence type="evidence at transcript level"/>